<keyword id="KW-0028">Amino-acid biosynthesis</keyword>
<keyword id="KW-0057">Aromatic amino acid biosynthesis</keyword>
<keyword id="KW-0413">Isomerase</keyword>
<keyword id="KW-1185">Reference proteome</keyword>
<keyword id="KW-0822">Tryptophan biosynthesis</keyword>
<protein>
    <recommendedName>
        <fullName evidence="1">N-(5'-phosphoribosyl)anthranilate isomerase</fullName>
        <shortName evidence="1">PRAI</shortName>
        <ecNumber evidence="1">5.3.1.24</ecNumber>
    </recommendedName>
</protein>
<proteinExistence type="inferred from homology"/>
<organism>
    <name type="scientific">Zymomonas mobilis subsp. mobilis (strain ATCC 31821 / ZM4 / CP4)</name>
    <dbReference type="NCBI Taxonomy" id="264203"/>
    <lineage>
        <taxon>Bacteria</taxon>
        <taxon>Pseudomonadati</taxon>
        <taxon>Pseudomonadota</taxon>
        <taxon>Alphaproteobacteria</taxon>
        <taxon>Sphingomonadales</taxon>
        <taxon>Zymomonadaceae</taxon>
        <taxon>Zymomonas</taxon>
    </lineage>
</organism>
<dbReference type="EC" id="5.3.1.24" evidence="1"/>
<dbReference type="EMBL" id="AE008692">
    <property type="protein sequence ID" value="AAV89210.1"/>
    <property type="molecule type" value="Genomic_DNA"/>
</dbReference>
<dbReference type="RefSeq" id="WP_011240489.1">
    <property type="nucleotide sequence ID" value="NZ_CP035711.1"/>
</dbReference>
<dbReference type="SMR" id="Q5NPZ5"/>
<dbReference type="STRING" id="264203.ZMO0586"/>
<dbReference type="KEGG" id="zmo:ZMO0586"/>
<dbReference type="eggNOG" id="COG0135">
    <property type="taxonomic scope" value="Bacteria"/>
</dbReference>
<dbReference type="HOGENOM" id="CLU_076364_1_1_5"/>
<dbReference type="UniPathway" id="UPA00035">
    <property type="reaction ID" value="UER00042"/>
</dbReference>
<dbReference type="Proteomes" id="UP000001173">
    <property type="component" value="Chromosome"/>
</dbReference>
<dbReference type="GO" id="GO:0004640">
    <property type="term" value="F:phosphoribosylanthranilate isomerase activity"/>
    <property type="evidence" value="ECO:0007669"/>
    <property type="project" value="UniProtKB-UniRule"/>
</dbReference>
<dbReference type="GO" id="GO:0000162">
    <property type="term" value="P:L-tryptophan biosynthetic process"/>
    <property type="evidence" value="ECO:0007669"/>
    <property type="project" value="UniProtKB-UniRule"/>
</dbReference>
<dbReference type="CDD" id="cd00405">
    <property type="entry name" value="PRAI"/>
    <property type="match status" value="1"/>
</dbReference>
<dbReference type="Gene3D" id="3.20.20.70">
    <property type="entry name" value="Aldolase class I"/>
    <property type="match status" value="1"/>
</dbReference>
<dbReference type="HAMAP" id="MF_00135">
    <property type="entry name" value="PRAI"/>
    <property type="match status" value="1"/>
</dbReference>
<dbReference type="InterPro" id="IPR013785">
    <property type="entry name" value="Aldolase_TIM"/>
</dbReference>
<dbReference type="InterPro" id="IPR001240">
    <property type="entry name" value="PRAI_dom"/>
</dbReference>
<dbReference type="InterPro" id="IPR011060">
    <property type="entry name" value="RibuloseP-bd_barrel"/>
</dbReference>
<dbReference type="InterPro" id="IPR044643">
    <property type="entry name" value="TrpF_fam"/>
</dbReference>
<dbReference type="NCBIfam" id="NF002295">
    <property type="entry name" value="PRK01222.1-1"/>
    <property type="match status" value="1"/>
</dbReference>
<dbReference type="PANTHER" id="PTHR42894">
    <property type="entry name" value="N-(5'-PHOSPHORIBOSYL)ANTHRANILATE ISOMERASE"/>
    <property type="match status" value="1"/>
</dbReference>
<dbReference type="PANTHER" id="PTHR42894:SF1">
    <property type="entry name" value="N-(5'-PHOSPHORIBOSYL)ANTHRANILATE ISOMERASE"/>
    <property type="match status" value="1"/>
</dbReference>
<dbReference type="Pfam" id="PF00697">
    <property type="entry name" value="PRAI"/>
    <property type="match status" value="1"/>
</dbReference>
<dbReference type="SUPFAM" id="SSF51366">
    <property type="entry name" value="Ribulose-phoshate binding barrel"/>
    <property type="match status" value="1"/>
</dbReference>
<name>TRPF_ZYMMO</name>
<feature type="chain" id="PRO_1000018652" description="N-(5'-phosphoribosyl)anthranilate isomerase">
    <location>
        <begin position="1"/>
        <end position="211"/>
    </location>
</feature>
<reference key="1">
    <citation type="journal article" date="2005" name="Nat. Biotechnol.">
        <title>The genome sequence of the ethanologenic bacterium Zymomonas mobilis ZM4.</title>
        <authorList>
            <person name="Seo J.-S."/>
            <person name="Chong H."/>
            <person name="Park H.S."/>
            <person name="Yoon K.-O."/>
            <person name="Jung C."/>
            <person name="Kim J.J."/>
            <person name="Hong J.H."/>
            <person name="Kim H."/>
            <person name="Kim J.-H."/>
            <person name="Kil J.-I."/>
            <person name="Park C.J."/>
            <person name="Oh H.-M."/>
            <person name="Lee J.-S."/>
            <person name="Jin S.-J."/>
            <person name="Um H.-W."/>
            <person name="Lee H.-J."/>
            <person name="Oh S.-J."/>
            <person name="Kim J.Y."/>
            <person name="Kang H.L."/>
            <person name="Lee S.Y."/>
            <person name="Lee K.J."/>
            <person name="Kang H.S."/>
        </authorList>
    </citation>
    <scope>NUCLEOTIDE SEQUENCE [LARGE SCALE GENOMIC DNA]</scope>
    <source>
        <strain>ATCC 31821 / ZM4 / CP4</strain>
    </source>
</reference>
<gene>
    <name evidence="1" type="primary">trpF</name>
    <name type="ordered locus">ZMO0586</name>
</gene>
<comment type="catalytic activity">
    <reaction evidence="1">
        <text>N-(5-phospho-beta-D-ribosyl)anthranilate = 1-(2-carboxyphenylamino)-1-deoxy-D-ribulose 5-phosphate</text>
        <dbReference type="Rhea" id="RHEA:21540"/>
        <dbReference type="ChEBI" id="CHEBI:18277"/>
        <dbReference type="ChEBI" id="CHEBI:58613"/>
        <dbReference type="EC" id="5.3.1.24"/>
    </reaction>
</comment>
<comment type="pathway">
    <text evidence="1">Amino-acid biosynthesis; L-tryptophan biosynthesis; L-tryptophan from chorismate: step 3/5.</text>
</comment>
<comment type="similarity">
    <text evidence="1">Belongs to the TrpF family.</text>
</comment>
<accession>Q5NPZ5</accession>
<evidence type="ECO:0000255" key="1">
    <source>
        <dbReference type="HAMAP-Rule" id="MF_00135"/>
    </source>
</evidence>
<sequence>MSVRTKICGLSTEETVATAVRYGADYIGFVFFEKSPRSVTPEKAAMLIRQIPDHVQKMGVFVDPDNNLLERALASGLTGFQLHGHETAERIASIRETFPKVKIWKALSIANSQDLAQAPHYRGLADRLLYDARTDGVLPGGMGRRFDWRLLKEYKHPLPWALSGGLDANNIAQAVAITGAELVDISSGVETSPGIKDMDKIAQFLQAVRLL</sequence>